<comment type="subcellular location">
    <subcellularLocation>
        <location evidence="2">Secreted</location>
    </subcellularLocation>
</comment>
<comment type="tissue specificity">
    <text evidence="3">Expressed by the venom duct.</text>
</comment>
<comment type="domain">
    <text evidence="2">The cysteine framework is I (CC-C-C). Alpha4/5 pattern.</text>
</comment>
<comment type="similarity">
    <text evidence="2">Belongs to the conotoxin A superfamily.</text>
</comment>
<dbReference type="GO" id="GO:0005576">
    <property type="term" value="C:extracellular region"/>
    <property type="evidence" value="ECO:0007669"/>
    <property type="project" value="UniProtKB-SubCell"/>
</dbReference>
<dbReference type="GO" id="GO:0099106">
    <property type="term" value="F:ion channel regulator activity"/>
    <property type="evidence" value="ECO:0007669"/>
    <property type="project" value="UniProtKB-KW"/>
</dbReference>
<dbReference type="GO" id="GO:0090729">
    <property type="term" value="F:toxin activity"/>
    <property type="evidence" value="ECO:0007669"/>
    <property type="project" value="UniProtKB-KW"/>
</dbReference>
<evidence type="ECO:0000250" key="1">
    <source>
        <dbReference type="UniProtKB" id="P69657"/>
    </source>
</evidence>
<evidence type="ECO:0000305" key="2"/>
<evidence type="ECO:0000305" key="3">
    <source>
    </source>
</evidence>
<feature type="propeptide" id="PRO_0000409967">
    <location>
        <begin position="1" status="less than"/>
        <end position="21"/>
    </location>
</feature>
<feature type="peptide" id="PRO_0000409968" description="Conotoxin Bu21">
    <location>
        <begin position="22"/>
        <end position="36"/>
    </location>
</feature>
<feature type="disulfide bond" evidence="1">
    <location>
        <begin position="22"/>
        <end position="28"/>
    </location>
</feature>
<feature type="disulfide bond" evidence="1">
    <location>
        <begin position="23"/>
        <end position="34"/>
    </location>
</feature>
<feature type="non-terminal residue">
    <location>
        <position position="1"/>
    </location>
</feature>
<name>CA121_CONBU</name>
<protein>
    <recommendedName>
        <fullName>Conotoxin Bu21</fullName>
    </recommendedName>
</protein>
<organism>
    <name type="scientific">Conus bullatus</name>
    <name type="common">Bubble cone</name>
    <dbReference type="NCBI Taxonomy" id="89438"/>
    <lineage>
        <taxon>Eukaryota</taxon>
        <taxon>Metazoa</taxon>
        <taxon>Spiralia</taxon>
        <taxon>Lophotrochozoa</taxon>
        <taxon>Mollusca</taxon>
        <taxon>Gastropoda</taxon>
        <taxon>Caenogastropoda</taxon>
        <taxon>Neogastropoda</taxon>
        <taxon>Conoidea</taxon>
        <taxon>Conidae</taxon>
        <taxon>Conus</taxon>
        <taxon>Textilia</taxon>
    </lineage>
</organism>
<accession>P0CY76</accession>
<keyword id="KW-0165">Cleavage on pair of basic residues</keyword>
<keyword id="KW-1015">Disulfide bond</keyword>
<keyword id="KW-0872">Ion channel impairing toxin</keyword>
<keyword id="KW-0528">Neurotoxin</keyword>
<keyword id="KW-0964">Secreted</keyword>
<keyword id="KW-0800">Toxin</keyword>
<reference key="1">
    <citation type="journal article" date="2011" name="BMC Genomics">
        <title>Characterization of the Conus bullatus genome and its venom-duct transcriptome.</title>
        <authorList>
            <person name="Hu H."/>
            <person name="Bandyopadhyay P.K."/>
            <person name="Olivera B.M."/>
            <person name="Yandell M."/>
        </authorList>
    </citation>
    <scope>NUCLEOTIDE SEQUENCE [MRNA]</scope>
    <source>
        <tissue>Venom duct</tissue>
    </source>
</reference>
<proteinExistence type="evidence at transcript level"/>
<sequence>DGANAEATDNKPGVFERDEKKCCWNRACTRLVPCSK</sequence>